<comment type="similarity">
    <text evidence="1">Belongs to the bacterial ribosomal protein bL32 family.</text>
</comment>
<feature type="chain" id="PRO_0000296533" description="Large ribosomal subunit protein bL32">
    <location>
        <begin position="1"/>
        <end position="56"/>
    </location>
</feature>
<feature type="region of interest" description="Disordered" evidence="2">
    <location>
        <begin position="1"/>
        <end position="37"/>
    </location>
</feature>
<feature type="compositionally biased region" description="Basic residues" evidence="2">
    <location>
        <begin position="1"/>
        <end position="16"/>
    </location>
</feature>
<feature type="compositionally biased region" description="Polar residues" evidence="2">
    <location>
        <begin position="25"/>
        <end position="35"/>
    </location>
</feature>
<gene>
    <name evidence="1" type="primary">rpmF</name>
    <name type="ordered locus">Patl_2126</name>
</gene>
<organism>
    <name type="scientific">Pseudoalteromonas atlantica (strain T6c / ATCC BAA-1087)</name>
    <dbReference type="NCBI Taxonomy" id="3042615"/>
    <lineage>
        <taxon>Bacteria</taxon>
        <taxon>Pseudomonadati</taxon>
        <taxon>Pseudomonadota</taxon>
        <taxon>Gammaproteobacteria</taxon>
        <taxon>Alteromonadales</taxon>
        <taxon>Alteromonadaceae</taxon>
        <taxon>Paraglaciecola</taxon>
    </lineage>
</organism>
<reference key="1">
    <citation type="submission" date="2006-06" db="EMBL/GenBank/DDBJ databases">
        <title>Complete sequence of Pseudoalteromonas atlantica T6c.</title>
        <authorList>
            <consortium name="US DOE Joint Genome Institute"/>
            <person name="Copeland A."/>
            <person name="Lucas S."/>
            <person name="Lapidus A."/>
            <person name="Barry K."/>
            <person name="Detter J.C."/>
            <person name="Glavina del Rio T."/>
            <person name="Hammon N."/>
            <person name="Israni S."/>
            <person name="Dalin E."/>
            <person name="Tice H."/>
            <person name="Pitluck S."/>
            <person name="Saunders E."/>
            <person name="Brettin T."/>
            <person name="Bruce D."/>
            <person name="Han C."/>
            <person name="Tapia R."/>
            <person name="Gilna P."/>
            <person name="Schmutz J."/>
            <person name="Larimer F."/>
            <person name="Land M."/>
            <person name="Hauser L."/>
            <person name="Kyrpides N."/>
            <person name="Kim E."/>
            <person name="Karls A.C."/>
            <person name="Bartlett D."/>
            <person name="Higgins B.P."/>
            <person name="Richardson P."/>
        </authorList>
    </citation>
    <scope>NUCLEOTIDE SEQUENCE [LARGE SCALE GENOMIC DNA]</scope>
    <source>
        <strain>T6c / ATCC BAA-1087</strain>
    </source>
</reference>
<proteinExistence type="inferred from homology"/>
<evidence type="ECO:0000255" key="1">
    <source>
        <dbReference type="HAMAP-Rule" id="MF_00340"/>
    </source>
</evidence>
<evidence type="ECO:0000256" key="2">
    <source>
        <dbReference type="SAM" id="MobiDB-lite"/>
    </source>
</evidence>
<evidence type="ECO:0000305" key="3"/>
<accession>Q15TZ4</accession>
<name>RL32_PSEA6</name>
<keyword id="KW-0687">Ribonucleoprotein</keyword>
<keyword id="KW-0689">Ribosomal protein</keyword>
<sequence>MAVQKNRKTRSKRGMRRSHDALGTATMSVDSTSGETHVRHHVTADGYYKGKKVLSL</sequence>
<dbReference type="EMBL" id="CP000388">
    <property type="protein sequence ID" value="ABG40644.1"/>
    <property type="molecule type" value="Genomic_DNA"/>
</dbReference>
<dbReference type="RefSeq" id="WP_011574931.1">
    <property type="nucleotide sequence ID" value="NC_008228.1"/>
</dbReference>
<dbReference type="SMR" id="Q15TZ4"/>
<dbReference type="STRING" id="342610.Patl_2126"/>
<dbReference type="KEGG" id="pat:Patl_2126"/>
<dbReference type="eggNOG" id="COG0333">
    <property type="taxonomic scope" value="Bacteria"/>
</dbReference>
<dbReference type="HOGENOM" id="CLU_129084_2_1_6"/>
<dbReference type="OrthoDB" id="9801927at2"/>
<dbReference type="Proteomes" id="UP000001981">
    <property type="component" value="Chromosome"/>
</dbReference>
<dbReference type="GO" id="GO:0015934">
    <property type="term" value="C:large ribosomal subunit"/>
    <property type="evidence" value="ECO:0007669"/>
    <property type="project" value="InterPro"/>
</dbReference>
<dbReference type="GO" id="GO:0003735">
    <property type="term" value="F:structural constituent of ribosome"/>
    <property type="evidence" value="ECO:0007669"/>
    <property type="project" value="InterPro"/>
</dbReference>
<dbReference type="GO" id="GO:0006412">
    <property type="term" value="P:translation"/>
    <property type="evidence" value="ECO:0007669"/>
    <property type="project" value="UniProtKB-UniRule"/>
</dbReference>
<dbReference type="HAMAP" id="MF_00340">
    <property type="entry name" value="Ribosomal_bL32"/>
    <property type="match status" value="1"/>
</dbReference>
<dbReference type="InterPro" id="IPR002677">
    <property type="entry name" value="Ribosomal_bL32"/>
</dbReference>
<dbReference type="InterPro" id="IPR044957">
    <property type="entry name" value="Ribosomal_bL32_bact"/>
</dbReference>
<dbReference type="InterPro" id="IPR011332">
    <property type="entry name" value="Ribosomal_zn-bd"/>
</dbReference>
<dbReference type="NCBIfam" id="TIGR01031">
    <property type="entry name" value="rpmF_bact"/>
    <property type="match status" value="1"/>
</dbReference>
<dbReference type="PANTHER" id="PTHR35534">
    <property type="entry name" value="50S RIBOSOMAL PROTEIN L32"/>
    <property type="match status" value="1"/>
</dbReference>
<dbReference type="PANTHER" id="PTHR35534:SF1">
    <property type="entry name" value="LARGE RIBOSOMAL SUBUNIT PROTEIN BL32"/>
    <property type="match status" value="1"/>
</dbReference>
<dbReference type="Pfam" id="PF01783">
    <property type="entry name" value="Ribosomal_L32p"/>
    <property type="match status" value="1"/>
</dbReference>
<dbReference type="SUPFAM" id="SSF57829">
    <property type="entry name" value="Zn-binding ribosomal proteins"/>
    <property type="match status" value="1"/>
</dbReference>
<protein>
    <recommendedName>
        <fullName evidence="1">Large ribosomal subunit protein bL32</fullName>
    </recommendedName>
    <alternativeName>
        <fullName evidence="3">50S ribosomal protein L32</fullName>
    </alternativeName>
</protein>